<gene>
    <name type="ordered locus">HI_1407</name>
</gene>
<feature type="chain" id="PRO_0000078045" description="Uncharacterized protein HI_1407">
    <location>
        <begin position="1"/>
        <end position="447"/>
    </location>
</feature>
<name>Y1407_HAEIN</name>
<comment type="similarity">
    <text evidence="1">To E.coli plasmid IncP-alpha RP4 protein TraN.</text>
</comment>
<evidence type="ECO:0000305" key="1"/>
<reference key="1">
    <citation type="journal article" date="1995" name="Science">
        <title>Whole-genome random sequencing and assembly of Haemophilus influenzae Rd.</title>
        <authorList>
            <person name="Fleischmann R.D."/>
            <person name="Adams M.D."/>
            <person name="White O."/>
            <person name="Clayton R.A."/>
            <person name="Kirkness E.F."/>
            <person name="Kerlavage A.R."/>
            <person name="Bult C.J."/>
            <person name="Tomb J.-F."/>
            <person name="Dougherty B.A."/>
            <person name="Merrick J.M."/>
            <person name="McKenney K."/>
            <person name="Sutton G.G."/>
            <person name="FitzHugh W."/>
            <person name="Fields C.A."/>
            <person name="Gocayne J.D."/>
            <person name="Scott J.D."/>
            <person name="Shirley R."/>
            <person name="Liu L.-I."/>
            <person name="Glodek A."/>
            <person name="Kelley J.M."/>
            <person name="Weidman J.F."/>
            <person name="Phillips C.A."/>
            <person name="Spriggs T."/>
            <person name="Hedblom E."/>
            <person name="Cotton M.D."/>
            <person name="Utterback T.R."/>
            <person name="Hanna M.C."/>
            <person name="Nguyen D.T."/>
            <person name="Saudek D.M."/>
            <person name="Brandon R.C."/>
            <person name="Fine L.D."/>
            <person name="Fritchman J.L."/>
            <person name="Fuhrmann J.L."/>
            <person name="Geoghagen N.S.M."/>
            <person name="Gnehm C.L."/>
            <person name="McDonald L.A."/>
            <person name="Small K.V."/>
            <person name="Fraser C.M."/>
            <person name="Smith H.O."/>
            <person name="Venter J.C."/>
        </authorList>
    </citation>
    <scope>NUCLEOTIDE SEQUENCE [LARGE SCALE GENOMIC DNA]</scope>
    <source>
        <strain>ATCC 51907 / DSM 11121 / KW20 / Rd</strain>
    </source>
</reference>
<proteinExistence type="predicted"/>
<keyword id="KW-1185">Reference proteome</keyword>
<accession>P71385</accession>
<sequence>MLMNLPEILKNQKARARKFKPVKMSKRTELWYRQQLKQFVKMMTNDVERALQQPQGSFFMDDAKGFQAISAKALMKVLEKYEKSDRTSQAENIANGFVSRGDAQNHAEVSTNLKNQTGIDLSAYLRNSPNITEKVNALTAGNIQLIKSIRSQYLDKVQNAVMQAMVRGSLNKDLAAQIKDLGKTTEKRAMFIARDQSSKLNAALTQARHEEVGIKKYMWSASLDERVRESHAEKDGQIFEYANPPADTDHPGHDFNCRCVQIPVLDNNEQIVKNSPIVSQQEKQQMRSEWSDDFPDTIIDRKLGDATSHPLYENAKKGSIEDAYQLAKDLVTDDAVNKLKQLVGNKNAILIPVHAEEAVGQNMIPVAIATVLSKKLHIPVDLSIVQATKVSRTGGDGWHRLVYSPAFDGIVPKDKYAIILDDTQTQGGTLASLKGYIIKEKLLHLML</sequence>
<protein>
    <recommendedName>
        <fullName>Uncharacterized protein HI_1407</fullName>
    </recommendedName>
</protein>
<dbReference type="EMBL" id="L42023">
    <property type="protein sequence ID" value="AAC23048.1"/>
    <property type="molecule type" value="Genomic_DNA"/>
</dbReference>
<dbReference type="PIR" id="B64122">
    <property type="entry name" value="B64122"/>
</dbReference>
<dbReference type="RefSeq" id="NP_439559.1">
    <property type="nucleotide sequence ID" value="NC_000907.1"/>
</dbReference>
<dbReference type="SMR" id="P71385"/>
<dbReference type="STRING" id="71421.HI_1407"/>
<dbReference type="EnsemblBacteria" id="AAC23048">
    <property type="protein sequence ID" value="AAC23048"/>
    <property type="gene ID" value="HI_1407"/>
</dbReference>
<dbReference type="KEGG" id="hin:HI_1407"/>
<dbReference type="PATRIC" id="fig|71421.8.peg.1467"/>
<dbReference type="eggNOG" id="COG2369">
    <property type="taxonomic scope" value="Bacteria"/>
</dbReference>
<dbReference type="HOGENOM" id="CLU_045237_0_0_6"/>
<dbReference type="OrthoDB" id="6637795at2"/>
<dbReference type="BioCyc" id="HINF71421:G1GJ1-1432-MONOMER"/>
<dbReference type="Proteomes" id="UP000000579">
    <property type="component" value="Chromosome"/>
</dbReference>
<dbReference type="CDD" id="cd06223">
    <property type="entry name" value="PRTases_typeI"/>
    <property type="match status" value="1"/>
</dbReference>
<dbReference type="InterPro" id="IPR006528">
    <property type="entry name" value="Phage_head_morphogenesis_dom"/>
</dbReference>
<dbReference type="InterPro" id="IPR000836">
    <property type="entry name" value="PRibTrfase_dom"/>
</dbReference>
<dbReference type="NCBIfam" id="TIGR01641">
    <property type="entry name" value="phageSPP1_gp7"/>
    <property type="match status" value="1"/>
</dbReference>
<dbReference type="Pfam" id="PF04233">
    <property type="entry name" value="Phage_Mu_F"/>
    <property type="match status" value="1"/>
</dbReference>
<organism>
    <name type="scientific">Haemophilus influenzae (strain ATCC 51907 / DSM 11121 / KW20 / Rd)</name>
    <dbReference type="NCBI Taxonomy" id="71421"/>
    <lineage>
        <taxon>Bacteria</taxon>
        <taxon>Pseudomonadati</taxon>
        <taxon>Pseudomonadota</taxon>
        <taxon>Gammaproteobacteria</taxon>
        <taxon>Pasteurellales</taxon>
        <taxon>Pasteurellaceae</taxon>
        <taxon>Haemophilus</taxon>
    </lineage>
</organism>